<gene>
    <name evidence="1" type="primary">uvrC</name>
    <name type="ordered locus">XCV2259</name>
</gene>
<sequence>MSVRPHNDFDGKAFAAQLSTAPGVYRMYAGDDTLLYVGKAGALRKRVGSYFNGTPKNARLTSMLSQVARMDVTVTRSEAEALLLENQLIKSLSPRYNVSLRDDKSYPYVLLTREQWPRIALHRGPRAVQGRYFGPYTGVTGVRETLSLMHKLFKLRSCEDSVFRNRSRPCLQYQIGRCSGPCVDLVAAPDYAESVRRATMFLEGKSDQLGEEIMHSMQQASEALEFERAARLRDLLSSLRSMQNRQYVDGRAADLDVLACATQSSQACVLLLSFRDGRNLGTRSFFPKTNGEDSADEILGAFVSQYYAEHSPPREILLDREIPEAELIEAALSTAAEHKVALKWNVRGERAGYLLLATRNAQLTLVTELTSQSAQHARSEALREMLGLAEPVKRVECFDISHTMGEATVASCVVFDASGPVRGQYRRFNISGITPGDDYAAMRQAIERRFRRAVEENGVLPDVLLIDGGAGQLAQAQAALADLGVENVLLVGVAKGEERRAGHEALIMADGRELRPGAASPALQFIQQVRDEAHRFAITGHRGRRHKARMTSKLEDIPGIGPRRRASLLKHFGGLVGLKAAGEAEIARVEGVNAALAARIYANLHGLALPDAAGEASPQ</sequence>
<reference key="1">
    <citation type="journal article" date="2005" name="J. Bacteriol.">
        <title>Insights into genome plasticity and pathogenicity of the plant pathogenic Bacterium Xanthomonas campestris pv. vesicatoria revealed by the complete genome sequence.</title>
        <authorList>
            <person name="Thieme F."/>
            <person name="Koebnik R."/>
            <person name="Bekel T."/>
            <person name="Berger C."/>
            <person name="Boch J."/>
            <person name="Buettner D."/>
            <person name="Caldana C."/>
            <person name="Gaigalat L."/>
            <person name="Goesmann A."/>
            <person name="Kay S."/>
            <person name="Kirchner O."/>
            <person name="Lanz C."/>
            <person name="Linke B."/>
            <person name="McHardy A.C."/>
            <person name="Meyer F."/>
            <person name="Mittenhuber G."/>
            <person name="Nies D.H."/>
            <person name="Niesbach-Kloesgen U."/>
            <person name="Patschkowski T."/>
            <person name="Rueckert C."/>
            <person name="Rupp O."/>
            <person name="Schneiker S."/>
            <person name="Schuster S.C."/>
            <person name="Vorhoelter F.J."/>
            <person name="Weber E."/>
            <person name="Puehler A."/>
            <person name="Bonas U."/>
            <person name="Bartels D."/>
            <person name="Kaiser O."/>
        </authorList>
    </citation>
    <scope>NUCLEOTIDE SEQUENCE [LARGE SCALE GENOMIC DNA]</scope>
    <source>
        <strain>85-10</strain>
    </source>
</reference>
<keyword id="KW-0963">Cytoplasm</keyword>
<keyword id="KW-0227">DNA damage</keyword>
<keyword id="KW-0228">DNA excision</keyword>
<keyword id="KW-0234">DNA repair</keyword>
<keyword id="KW-0267">Excision nuclease</keyword>
<keyword id="KW-0742">SOS response</keyword>
<feature type="chain" id="PRO_0000227494" description="UvrABC system protein C">
    <location>
        <begin position="1"/>
        <end position="619"/>
    </location>
</feature>
<feature type="domain" description="GIY-YIG" evidence="1">
    <location>
        <begin position="20"/>
        <end position="98"/>
    </location>
</feature>
<feature type="domain" description="UVR" evidence="1">
    <location>
        <begin position="207"/>
        <end position="242"/>
    </location>
</feature>
<name>UVRC_XANE5</name>
<proteinExistence type="inferred from homology"/>
<evidence type="ECO:0000255" key="1">
    <source>
        <dbReference type="HAMAP-Rule" id="MF_00203"/>
    </source>
</evidence>
<comment type="function">
    <text evidence="1">The UvrABC repair system catalyzes the recognition and processing of DNA lesions. UvrC both incises the 5' and 3' sides of the lesion. The N-terminal half is responsible for the 3' incision and the C-terminal half is responsible for the 5' incision.</text>
</comment>
<comment type="subunit">
    <text evidence="1">Interacts with UvrB in an incision complex.</text>
</comment>
<comment type="subcellular location">
    <subcellularLocation>
        <location evidence="1">Cytoplasm</location>
    </subcellularLocation>
</comment>
<comment type="similarity">
    <text evidence="1">Belongs to the UvrC family.</text>
</comment>
<organism>
    <name type="scientific">Xanthomonas euvesicatoria pv. vesicatoria (strain 85-10)</name>
    <name type="common">Xanthomonas campestris pv. vesicatoria</name>
    <dbReference type="NCBI Taxonomy" id="316273"/>
    <lineage>
        <taxon>Bacteria</taxon>
        <taxon>Pseudomonadati</taxon>
        <taxon>Pseudomonadota</taxon>
        <taxon>Gammaproteobacteria</taxon>
        <taxon>Lysobacterales</taxon>
        <taxon>Lysobacteraceae</taxon>
        <taxon>Xanthomonas</taxon>
    </lineage>
</organism>
<dbReference type="EMBL" id="AM039952">
    <property type="protein sequence ID" value="CAJ23936.1"/>
    <property type="molecule type" value="Genomic_DNA"/>
</dbReference>
<dbReference type="RefSeq" id="WP_011347461.1">
    <property type="nucleotide sequence ID" value="NZ_CP017190.1"/>
</dbReference>
<dbReference type="SMR" id="Q3BTC3"/>
<dbReference type="STRING" id="456327.BJD11_11095"/>
<dbReference type="KEGG" id="xcv:XCV2259"/>
<dbReference type="eggNOG" id="COG0322">
    <property type="taxonomic scope" value="Bacteria"/>
</dbReference>
<dbReference type="HOGENOM" id="CLU_014841_3_0_6"/>
<dbReference type="Proteomes" id="UP000007069">
    <property type="component" value="Chromosome"/>
</dbReference>
<dbReference type="GO" id="GO:0005737">
    <property type="term" value="C:cytoplasm"/>
    <property type="evidence" value="ECO:0007669"/>
    <property type="project" value="UniProtKB-SubCell"/>
</dbReference>
<dbReference type="GO" id="GO:0009380">
    <property type="term" value="C:excinuclease repair complex"/>
    <property type="evidence" value="ECO:0007669"/>
    <property type="project" value="InterPro"/>
</dbReference>
<dbReference type="GO" id="GO:0003677">
    <property type="term" value="F:DNA binding"/>
    <property type="evidence" value="ECO:0007669"/>
    <property type="project" value="UniProtKB-UniRule"/>
</dbReference>
<dbReference type="GO" id="GO:0009381">
    <property type="term" value="F:excinuclease ABC activity"/>
    <property type="evidence" value="ECO:0007669"/>
    <property type="project" value="UniProtKB-UniRule"/>
</dbReference>
<dbReference type="GO" id="GO:0006289">
    <property type="term" value="P:nucleotide-excision repair"/>
    <property type="evidence" value="ECO:0007669"/>
    <property type="project" value="UniProtKB-UniRule"/>
</dbReference>
<dbReference type="GO" id="GO:0009432">
    <property type="term" value="P:SOS response"/>
    <property type="evidence" value="ECO:0007669"/>
    <property type="project" value="UniProtKB-UniRule"/>
</dbReference>
<dbReference type="CDD" id="cd10434">
    <property type="entry name" value="GIY-YIG_UvrC_Cho"/>
    <property type="match status" value="1"/>
</dbReference>
<dbReference type="FunFam" id="1.10.150.20:FF:000005">
    <property type="entry name" value="UvrABC system protein C"/>
    <property type="match status" value="1"/>
</dbReference>
<dbReference type="FunFam" id="3.30.420.340:FF:000001">
    <property type="entry name" value="UvrABC system protein C"/>
    <property type="match status" value="1"/>
</dbReference>
<dbReference type="FunFam" id="3.40.1440.10:FF:000001">
    <property type="entry name" value="UvrABC system protein C"/>
    <property type="match status" value="1"/>
</dbReference>
<dbReference type="Gene3D" id="1.10.150.20">
    <property type="entry name" value="5' to 3' exonuclease, C-terminal subdomain"/>
    <property type="match status" value="1"/>
</dbReference>
<dbReference type="Gene3D" id="3.40.1440.10">
    <property type="entry name" value="GIY-YIG endonuclease"/>
    <property type="match status" value="1"/>
</dbReference>
<dbReference type="Gene3D" id="4.10.860.10">
    <property type="entry name" value="UVR domain"/>
    <property type="match status" value="1"/>
</dbReference>
<dbReference type="Gene3D" id="3.30.420.340">
    <property type="entry name" value="UvrC, RNAse H endonuclease domain"/>
    <property type="match status" value="1"/>
</dbReference>
<dbReference type="HAMAP" id="MF_00203">
    <property type="entry name" value="UvrC"/>
    <property type="match status" value="1"/>
</dbReference>
<dbReference type="InterPro" id="IPR000305">
    <property type="entry name" value="GIY-YIG_endonuc"/>
</dbReference>
<dbReference type="InterPro" id="IPR035901">
    <property type="entry name" value="GIY-YIG_endonuc_sf"/>
</dbReference>
<dbReference type="InterPro" id="IPR047296">
    <property type="entry name" value="GIY-YIG_UvrC_Cho"/>
</dbReference>
<dbReference type="InterPro" id="IPR003583">
    <property type="entry name" value="Hlx-hairpin-Hlx_DNA-bd_motif"/>
</dbReference>
<dbReference type="InterPro" id="IPR010994">
    <property type="entry name" value="RuvA_2-like"/>
</dbReference>
<dbReference type="InterPro" id="IPR001943">
    <property type="entry name" value="UVR_dom"/>
</dbReference>
<dbReference type="InterPro" id="IPR036876">
    <property type="entry name" value="UVR_dom_sf"/>
</dbReference>
<dbReference type="InterPro" id="IPR050066">
    <property type="entry name" value="UvrABC_protein_C"/>
</dbReference>
<dbReference type="InterPro" id="IPR004791">
    <property type="entry name" value="UvrC"/>
</dbReference>
<dbReference type="InterPro" id="IPR001162">
    <property type="entry name" value="UvrC_RNase_H_dom"/>
</dbReference>
<dbReference type="InterPro" id="IPR038476">
    <property type="entry name" value="UvrC_RNase_H_dom_sf"/>
</dbReference>
<dbReference type="NCBIfam" id="TIGR00194">
    <property type="entry name" value="uvrC"/>
    <property type="match status" value="1"/>
</dbReference>
<dbReference type="PANTHER" id="PTHR30562:SF1">
    <property type="entry name" value="UVRABC SYSTEM PROTEIN C"/>
    <property type="match status" value="1"/>
</dbReference>
<dbReference type="PANTHER" id="PTHR30562">
    <property type="entry name" value="UVRC/OXIDOREDUCTASE"/>
    <property type="match status" value="1"/>
</dbReference>
<dbReference type="Pfam" id="PF01541">
    <property type="entry name" value="GIY-YIG"/>
    <property type="match status" value="1"/>
</dbReference>
<dbReference type="Pfam" id="PF14520">
    <property type="entry name" value="HHH_5"/>
    <property type="match status" value="1"/>
</dbReference>
<dbReference type="Pfam" id="PF02151">
    <property type="entry name" value="UVR"/>
    <property type="match status" value="1"/>
</dbReference>
<dbReference type="Pfam" id="PF22920">
    <property type="entry name" value="UvrC_RNaseH"/>
    <property type="match status" value="1"/>
</dbReference>
<dbReference type="Pfam" id="PF08459">
    <property type="entry name" value="UvrC_RNaseH_dom"/>
    <property type="match status" value="1"/>
</dbReference>
<dbReference type="SMART" id="SM00465">
    <property type="entry name" value="GIYc"/>
    <property type="match status" value="1"/>
</dbReference>
<dbReference type="SMART" id="SM00278">
    <property type="entry name" value="HhH1"/>
    <property type="match status" value="2"/>
</dbReference>
<dbReference type="SUPFAM" id="SSF46600">
    <property type="entry name" value="C-terminal UvrC-binding domain of UvrB"/>
    <property type="match status" value="1"/>
</dbReference>
<dbReference type="SUPFAM" id="SSF82771">
    <property type="entry name" value="GIY-YIG endonuclease"/>
    <property type="match status" value="1"/>
</dbReference>
<dbReference type="SUPFAM" id="SSF47781">
    <property type="entry name" value="RuvA domain 2-like"/>
    <property type="match status" value="1"/>
</dbReference>
<dbReference type="PROSITE" id="PS50164">
    <property type="entry name" value="GIY_YIG"/>
    <property type="match status" value="1"/>
</dbReference>
<dbReference type="PROSITE" id="PS50151">
    <property type="entry name" value="UVR"/>
    <property type="match status" value="1"/>
</dbReference>
<dbReference type="PROSITE" id="PS50165">
    <property type="entry name" value="UVRC"/>
    <property type="match status" value="1"/>
</dbReference>
<protein>
    <recommendedName>
        <fullName evidence="1">UvrABC system protein C</fullName>
        <shortName evidence="1">Protein UvrC</shortName>
    </recommendedName>
    <alternativeName>
        <fullName evidence="1">Excinuclease ABC subunit C</fullName>
    </alternativeName>
</protein>
<accession>Q3BTC3</accession>